<evidence type="ECO:0000250" key="1">
    <source>
        <dbReference type="UniProtKB" id="A0A0H3GN27"/>
    </source>
</evidence>
<evidence type="ECO:0000255" key="2">
    <source>
        <dbReference type="HAMAP-Rule" id="MF_00318"/>
    </source>
</evidence>
<evidence type="ECO:0000269" key="3">
    <source>
    </source>
</evidence>
<dbReference type="EC" id="4.2.1.11" evidence="2"/>
<dbReference type="EMBL" id="AL591983">
    <property type="protein sequence ID" value="CAD00533.1"/>
    <property type="molecule type" value="Genomic_DNA"/>
</dbReference>
<dbReference type="PIR" id="AG1381">
    <property type="entry name" value="AG1381"/>
</dbReference>
<dbReference type="RefSeq" id="NP_465978.1">
    <property type="nucleotide sequence ID" value="NC_003210.1"/>
</dbReference>
<dbReference type="RefSeq" id="WP_003727923.1">
    <property type="nucleotide sequence ID" value="NZ_CP149495.1"/>
</dbReference>
<dbReference type="SMR" id="P64074"/>
<dbReference type="STRING" id="169963.gene:17595165"/>
<dbReference type="PaxDb" id="169963-lmo2455"/>
<dbReference type="EnsemblBacteria" id="CAD00533">
    <property type="protein sequence ID" value="CAD00533"/>
    <property type="gene ID" value="CAD00533"/>
</dbReference>
<dbReference type="GeneID" id="93235861"/>
<dbReference type="GeneID" id="987382"/>
<dbReference type="KEGG" id="lmo:lmo2455"/>
<dbReference type="PATRIC" id="fig|169963.11.peg.2514"/>
<dbReference type="eggNOG" id="COG0148">
    <property type="taxonomic scope" value="Bacteria"/>
</dbReference>
<dbReference type="HOGENOM" id="CLU_031223_2_1_9"/>
<dbReference type="OrthoDB" id="9804716at2"/>
<dbReference type="PhylomeDB" id="P64074"/>
<dbReference type="BioCyc" id="LMON169963:LMO2455-MONOMER"/>
<dbReference type="UniPathway" id="UPA00109">
    <property type="reaction ID" value="UER00187"/>
</dbReference>
<dbReference type="Proteomes" id="UP000000817">
    <property type="component" value="Chromosome"/>
</dbReference>
<dbReference type="GO" id="GO:0009986">
    <property type="term" value="C:cell surface"/>
    <property type="evidence" value="ECO:0007669"/>
    <property type="project" value="UniProtKB-SubCell"/>
</dbReference>
<dbReference type="GO" id="GO:0005576">
    <property type="term" value="C:extracellular region"/>
    <property type="evidence" value="ECO:0007669"/>
    <property type="project" value="UniProtKB-SubCell"/>
</dbReference>
<dbReference type="GO" id="GO:0000015">
    <property type="term" value="C:phosphopyruvate hydratase complex"/>
    <property type="evidence" value="ECO:0000318"/>
    <property type="project" value="GO_Central"/>
</dbReference>
<dbReference type="GO" id="GO:0000287">
    <property type="term" value="F:magnesium ion binding"/>
    <property type="evidence" value="ECO:0007669"/>
    <property type="project" value="UniProtKB-UniRule"/>
</dbReference>
<dbReference type="GO" id="GO:0004634">
    <property type="term" value="F:phosphopyruvate hydratase activity"/>
    <property type="evidence" value="ECO:0000318"/>
    <property type="project" value="GO_Central"/>
</dbReference>
<dbReference type="GO" id="GO:0006096">
    <property type="term" value="P:glycolytic process"/>
    <property type="evidence" value="ECO:0000318"/>
    <property type="project" value="GO_Central"/>
</dbReference>
<dbReference type="CDD" id="cd03313">
    <property type="entry name" value="enolase"/>
    <property type="match status" value="1"/>
</dbReference>
<dbReference type="FunFam" id="3.20.20.120:FF:000001">
    <property type="entry name" value="Enolase"/>
    <property type="match status" value="1"/>
</dbReference>
<dbReference type="FunFam" id="3.30.390.10:FF:000001">
    <property type="entry name" value="Enolase"/>
    <property type="match status" value="1"/>
</dbReference>
<dbReference type="Gene3D" id="3.20.20.120">
    <property type="entry name" value="Enolase-like C-terminal domain"/>
    <property type="match status" value="1"/>
</dbReference>
<dbReference type="Gene3D" id="3.30.390.10">
    <property type="entry name" value="Enolase-like, N-terminal domain"/>
    <property type="match status" value="1"/>
</dbReference>
<dbReference type="HAMAP" id="MF_00318">
    <property type="entry name" value="Enolase"/>
    <property type="match status" value="1"/>
</dbReference>
<dbReference type="InterPro" id="IPR000941">
    <property type="entry name" value="Enolase"/>
</dbReference>
<dbReference type="InterPro" id="IPR036849">
    <property type="entry name" value="Enolase-like_C_sf"/>
</dbReference>
<dbReference type="InterPro" id="IPR029017">
    <property type="entry name" value="Enolase-like_N"/>
</dbReference>
<dbReference type="InterPro" id="IPR020810">
    <property type="entry name" value="Enolase_C"/>
</dbReference>
<dbReference type="InterPro" id="IPR020809">
    <property type="entry name" value="Enolase_CS"/>
</dbReference>
<dbReference type="InterPro" id="IPR020811">
    <property type="entry name" value="Enolase_N"/>
</dbReference>
<dbReference type="NCBIfam" id="TIGR01060">
    <property type="entry name" value="eno"/>
    <property type="match status" value="1"/>
</dbReference>
<dbReference type="PANTHER" id="PTHR11902">
    <property type="entry name" value="ENOLASE"/>
    <property type="match status" value="1"/>
</dbReference>
<dbReference type="PANTHER" id="PTHR11902:SF1">
    <property type="entry name" value="ENOLASE"/>
    <property type="match status" value="1"/>
</dbReference>
<dbReference type="Pfam" id="PF00113">
    <property type="entry name" value="Enolase_C"/>
    <property type="match status" value="1"/>
</dbReference>
<dbReference type="Pfam" id="PF03952">
    <property type="entry name" value="Enolase_N"/>
    <property type="match status" value="1"/>
</dbReference>
<dbReference type="PIRSF" id="PIRSF001400">
    <property type="entry name" value="Enolase"/>
    <property type="match status" value="1"/>
</dbReference>
<dbReference type="PRINTS" id="PR00148">
    <property type="entry name" value="ENOLASE"/>
</dbReference>
<dbReference type="SFLD" id="SFLDF00002">
    <property type="entry name" value="enolase"/>
    <property type="match status" value="1"/>
</dbReference>
<dbReference type="SFLD" id="SFLDG00178">
    <property type="entry name" value="enolase"/>
    <property type="match status" value="1"/>
</dbReference>
<dbReference type="SMART" id="SM01192">
    <property type="entry name" value="Enolase_C"/>
    <property type="match status" value="1"/>
</dbReference>
<dbReference type="SMART" id="SM01193">
    <property type="entry name" value="Enolase_N"/>
    <property type="match status" value="1"/>
</dbReference>
<dbReference type="SUPFAM" id="SSF51604">
    <property type="entry name" value="Enolase C-terminal domain-like"/>
    <property type="match status" value="1"/>
</dbReference>
<dbReference type="SUPFAM" id="SSF54826">
    <property type="entry name" value="Enolase N-terminal domain-like"/>
    <property type="match status" value="1"/>
</dbReference>
<dbReference type="PROSITE" id="PS00164">
    <property type="entry name" value="ENOLASE"/>
    <property type="match status" value="1"/>
</dbReference>
<proteinExistence type="evidence at protein level"/>
<comment type="function">
    <text evidence="2">Catalyzes the reversible conversion of 2-phosphoglycerate (2-PG) into phosphoenolpyruvate (PEP). It is essential for the degradation of carbohydrates via glycolysis.</text>
</comment>
<comment type="function">
    <text evidence="3">'Moonlights' as a plasminogen receptor. Binds plasminogen when expressed on the bacterial cell surface, potentially allowing the bacterium to acquire surface-associated proteolytic activity, which in turn contributes to tissue invasion and virulence.</text>
</comment>
<comment type="catalytic activity">
    <reaction evidence="2">
        <text>(2R)-2-phosphoglycerate = phosphoenolpyruvate + H2O</text>
        <dbReference type="Rhea" id="RHEA:10164"/>
        <dbReference type="ChEBI" id="CHEBI:15377"/>
        <dbReference type="ChEBI" id="CHEBI:58289"/>
        <dbReference type="ChEBI" id="CHEBI:58702"/>
        <dbReference type="EC" id="4.2.1.11"/>
    </reaction>
</comment>
<comment type="cofactor">
    <cofactor evidence="2">
        <name>Mg(2+)</name>
        <dbReference type="ChEBI" id="CHEBI:18420"/>
    </cofactor>
    <text evidence="2">Binds a second Mg(2+) ion via substrate during catalysis.</text>
</comment>
<comment type="pathway">
    <text evidence="2">Carbohydrate degradation; glycolysis; pyruvate from D-glyceraldehyde 3-phosphate: step 4/5.</text>
</comment>
<comment type="subcellular location">
    <subcellularLocation>
        <location evidence="2 3">Cytoplasm</location>
    </subcellularLocation>
    <subcellularLocation>
        <location evidence="2 3">Secreted</location>
    </subcellularLocation>
    <subcellularLocation>
        <location evidence="2 3">Cell surface</location>
    </subcellularLocation>
    <text evidence="1 2 3">Fractions of enolase are present in both the cytoplasm and on the cell surface (PubMed:15378750). The export of enolase depends secA2 (By similarity).</text>
</comment>
<comment type="similarity">
    <text evidence="2">Belongs to the enolase family.</text>
</comment>
<sequence length="430" mass="46472">MSIITEVYAREVLDSRGNPTVEVEVYTEAGAFGRALVPSGASTGEYEAVELRDGDKARYLGKGVLKAVENVNDIIADKIIGFDVTDQIGIDKAMIELDGTPNKGKLGANAILGVSLAAARAAADELGVHLYEYLGGVNGKVLPVPMMNILNGGEHADNNVDVQEFMVMPVGAPNFKEALRMGAEILHALKAVLKGKGLNTGVGDEGGFAPNLKSNEEALETIMQAIKDAGYKPGEEVKLAMDAASSEFYNRETGKYELKGEGVTRTSEEMVTWYEEMITKYPIISIEDGLDENDWDGFKLLTERIGDRVQLVGDDLFVTNTTKLKEGIEKGIANSILIKVNQIGTLTETLDAIEMAKRAGYTAVISHRSGETEDSTIADIAVATNAGQIKTGAPTRTDRVAKYNQLLRIEDNLADLAEYHGNDTFYNLKK</sequence>
<reference key="1">
    <citation type="journal article" date="2001" name="Science">
        <title>Comparative genomics of Listeria species.</title>
        <authorList>
            <person name="Glaser P."/>
            <person name="Frangeul L."/>
            <person name="Buchrieser C."/>
            <person name="Rusniok C."/>
            <person name="Amend A."/>
            <person name="Baquero F."/>
            <person name="Berche P."/>
            <person name="Bloecker H."/>
            <person name="Brandt P."/>
            <person name="Chakraborty T."/>
            <person name="Charbit A."/>
            <person name="Chetouani F."/>
            <person name="Couve E."/>
            <person name="de Daruvar A."/>
            <person name="Dehoux P."/>
            <person name="Domann E."/>
            <person name="Dominguez-Bernal G."/>
            <person name="Duchaud E."/>
            <person name="Durant L."/>
            <person name="Dussurget O."/>
            <person name="Entian K.-D."/>
            <person name="Fsihi H."/>
            <person name="Garcia-del Portillo F."/>
            <person name="Garrido P."/>
            <person name="Gautier L."/>
            <person name="Goebel W."/>
            <person name="Gomez-Lopez N."/>
            <person name="Hain T."/>
            <person name="Hauf J."/>
            <person name="Jackson D."/>
            <person name="Jones L.-M."/>
            <person name="Kaerst U."/>
            <person name="Kreft J."/>
            <person name="Kuhn M."/>
            <person name="Kunst F."/>
            <person name="Kurapkat G."/>
            <person name="Madueno E."/>
            <person name="Maitournam A."/>
            <person name="Mata Vicente J."/>
            <person name="Ng E."/>
            <person name="Nedjari H."/>
            <person name="Nordsiek G."/>
            <person name="Novella S."/>
            <person name="de Pablos B."/>
            <person name="Perez-Diaz J.-C."/>
            <person name="Purcell R."/>
            <person name="Remmel B."/>
            <person name="Rose M."/>
            <person name="Schlueter T."/>
            <person name="Simoes N."/>
            <person name="Tierrez A."/>
            <person name="Vazquez-Boland J.-A."/>
            <person name="Voss H."/>
            <person name="Wehland J."/>
            <person name="Cossart P."/>
        </authorList>
    </citation>
    <scope>NUCLEOTIDE SEQUENCE [LARGE SCALE GENOMIC DNA]</scope>
    <source>
        <strain>ATCC BAA-679 / EGD-e</strain>
    </source>
</reference>
<reference key="2">
    <citation type="journal article" date="2004" name="Proteomics">
        <title>The cell wall subproteome of Listeria monocytogenes.</title>
        <authorList>
            <person name="Schaumburg J."/>
            <person name="Diekmann O."/>
            <person name="Hagendorff P."/>
            <person name="Bergmann S."/>
            <person name="Rohde M."/>
            <person name="Hammerschmidt S."/>
            <person name="Jaensch L."/>
            <person name="Wehland J."/>
            <person name="Kaerst U."/>
        </authorList>
    </citation>
    <scope>PROTEIN SEQUENCE OF 2-13</scope>
    <scope>IDENTIFICATION BY MASS SPECTROMETRY</scope>
    <scope>SUBCELLULAR LOCATION</scope>
    <scope>FUNCTION IN VIRULENCE</scope>
    <scope>BINDING TO PLASMINOGEN</scope>
    <source>
        <strain>ATCC BAA-679 / EGD-e</strain>
    </source>
</reference>
<gene>
    <name evidence="2" type="primary">eno</name>
    <name type="ordered locus">lmo2455</name>
</gene>
<feature type="initiator methionine" description="Removed" evidence="3">
    <location>
        <position position="1"/>
    </location>
</feature>
<feature type="chain" id="PRO_0000133916" description="Enolase">
    <location>
        <begin position="2"/>
        <end position="430"/>
    </location>
</feature>
<feature type="active site" description="Proton donor" evidence="2">
    <location>
        <position position="205"/>
    </location>
</feature>
<feature type="active site" description="Proton acceptor" evidence="2">
    <location>
        <position position="339"/>
    </location>
</feature>
<feature type="binding site" evidence="2">
    <location>
        <position position="163"/>
    </location>
    <ligand>
        <name>(2R)-2-phosphoglycerate</name>
        <dbReference type="ChEBI" id="CHEBI:58289"/>
    </ligand>
</feature>
<feature type="binding site" evidence="2">
    <location>
        <position position="242"/>
    </location>
    <ligand>
        <name>Mg(2+)</name>
        <dbReference type="ChEBI" id="CHEBI:18420"/>
    </ligand>
</feature>
<feature type="binding site" evidence="2">
    <location>
        <position position="287"/>
    </location>
    <ligand>
        <name>Mg(2+)</name>
        <dbReference type="ChEBI" id="CHEBI:18420"/>
    </ligand>
</feature>
<feature type="binding site" evidence="2">
    <location>
        <position position="314"/>
    </location>
    <ligand>
        <name>Mg(2+)</name>
        <dbReference type="ChEBI" id="CHEBI:18420"/>
    </ligand>
</feature>
<feature type="binding site" evidence="2">
    <location>
        <position position="339"/>
    </location>
    <ligand>
        <name>(2R)-2-phosphoglycerate</name>
        <dbReference type="ChEBI" id="CHEBI:58289"/>
    </ligand>
</feature>
<feature type="binding site" evidence="2">
    <location>
        <position position="368"/>
    </location>
    <ligand>
        <name>(2R)-2-phosphoglycerate</name>
        <dbReference type="ChEBI" id="CHEBI:58289"/>
    </ligand>
</feature>
<feature type="binding site" evidence="2">
    <location>
        <position position="369"/>
    </location>
    <ligand>
        <name>(2R)-2-phosphoglycerate</name>
        <dbReference type="ChEBI" id="CHEBI:58289"/>
    </ligand>
</feature>
<feature type="binding site" evidence="2">
    <location>
        <position position="390"/>
    </location>
    <ligand>
        <name>(2R)-2-phosphoglycerate</name>
        <dbReference type="ChEBI" id="CHEBI:58289"/>
    </ligand>
</feature>
<accession>P64074</accession>
<accession>Q928I3</accession>
<organism>
    <name type="scientific">Listeria monocytogenes serovar 1/2a (strain ATCC BAA-679 / EGD-e)</name>
    <dbReference type="NCBI Taxonomy" id="169963"/>
    <lineage>
        <taxon>Bacteria</taxon>
        <taxon>Bacillati</taxon>
        <taxon>Bacillota</taxon>
        <taxon>Bacilli</taxon>
        <taxon>Bacillales</taxon>
        <taxon>Listeriaceae</taxon>
        <taxon>Listeria</taxon>
    </lineage>
</organism>
<keyword id="KW-0963">Cytoplasm</keyword>
<keyword id="KW-0903">Direct protein sequencing</keyword>
<keyword id="KW-0324">Glycolysis</keyword>
<keyword id="KW-0456">Lyase</keyword>
<keyword id="KW-0460">Magnesium</keyword>
<keyword id="KW-0479">Metal-binding</keyword>
<keyword id="KW-1185">Reference proteome</keyword>
<keyword id="KW-0964">Secreted</keyword>
<keyword id="KW-0843">Virulence</keyword>
<name>ENO_LISMO</name>
<protein>
    <recommendedName>
        <fullName evidence="2">Enolase</fullName>
        <ecNumber evidence="2">4.2.1.11</ecNumber>
    </recommendedName>
    <alternativeName>
        <fullName evidence="2">2-phospho-D-glycerate hydro-lyase</fullName>
    </alternativeName>
    <alternativeName>
        <fullName evidence="2">2-phosphoglycerate dehydratase</fullName>
    </alternativeName>
</protein>